<sequence length="89" mass="10555">MVLLAENKDEMIANFKLHDSDTGSPEVQVALLTHRISYLTEHVKVHKKDHHSRRGLLILVGRRRSLLDYLRKKDIERYRSLIERLGLRR</sequence>
<accession>C0QHM5</accession>
<protein>
    <recommendedName>
        <fullName evidence="1">Small ribosomal subunit protein uS15</fullName>
    </recommendedName>
    <alternativeName>
        <fullName evidence="2">30S ribosomal protein S15</fullName>
    </alternativeName>
</protein>
<evidence type="ECO:0000255" key="1">
    <source>
        <dbReference type="HAMAP-Rule" id="MF_01343"/>
    </source>
</evidence>
<evidence type="ECO:0000305" key="2"/>
<gene>
    <name evidence="1" type="primary">rpsO</name>
    <name type="ordered locus">HRM2_04690</name>
</gene>
<keyword id="KW-1185">Reference proteome</keyword>
<keyword id="KW-0687">Ribonucleoprotein</keyword>
<keyword id="KW-0689">Ribosomal protein</keyword>
<keyword id="KW-0694">RNA-binding</keyword>
<keyword id="KW-0699">rRNA-binding</keyword>
<proteinExistence type="inferred from homology"/>
<name>RS15_DESAH</name>
<feature type="chain" id="PRO_1000214753" description="Small ribosomal subunit protein uS15">
    <location>
        <begin position="1"/>
        <end position="89"/>
    </location>
</feature>
<organism>
    <name type="scientific">Desulforapulum autotrophicum (strain ATCC 43914 / DSM 3382 / VKM B-1955 / HRM2)</name>
    <name type="common">Desulfobacterium autotrophicum</name>
    <dbReference type="NCBI Taxonomy" id="177437"/>
    <lineage>
        <taxon>Bacteria</taxon>
        <taxon>Pseudomonadati</taxon>
        <taxon>Thermodesulfobacteriota</taxon>
        <taxon>Desulfobacteria</taxon>
        <taxon>Desulfobacterales</taxon>
        <taxon>Desulfobacteraceae</taxon>
        <taxon>Desulforapulum</taxon>
    </lineage>
</organism>
<dbReference type="EMBL" id="CP001087">
    <property type="protein sequence ID" value="ACN13583.1"/>
    <property type="molecule type" value="Genomic_DNA"/>
</dbReference>
<dbReference type="RefSeq" id="WP_012662832.1">
    <property type="nucleotide sequence ID" value="NC_012108.1"/>
</dbReference>
<dbReference type="SMR" id="C0QHM5"/>
<dbReference type="STRING" id="177437.HRM2_04690"/>
<dbReference type="KEGG" id="dat:HRM2_04690"/>
<dbReference type="eggNOG" id="COG0184">
    <property type="taxonomic scope" value="Bacteria"/>
</dbReference>
<dbReference type="HOGENOM" id="CLU_148518_0_0_7"/>
<dbReference type="OrthoDB" id="9799262at2"/>
<dbReference type="Proteomes" id="UP000000442">
    <property type="component" value="Chromosome"/>
</dbReference>
<dbReference type="GO" id="GO:0022627">
    <property type="term" value="C:cytosolic small ribosomal subunit"/>
    <property type="evidence" value="ECO:0007669"/>
    <property type="project" value="TreeGrafter"/>
</dbReference>
<dbReference type="GO" id="GO:0019843">
    <property type="term" value="F:rRNA binding"/>
    <property type="evidence" value="ECO:0007669"/>
    <property type="project" value="UniProtKB-UniRule"/>
</dbReference>
<dbReference type="GO" id="GO:0003735">
    <property type="term" value="F:structural constituent of ribosome"/>
    <property type="evidence" value="ECO:0007669"/>
    <property type="project" value="InterPro"/>
</dbReference>
<dbReference type="GO" id="GO:0006412">
    <property type="term" value="P:translation"/>
    <property type="evidence" value="ECO:0007669"/>
    <property type="project" value="UniProtKB-UniRule"/>
</dbReference>
<dbReference type="CDD" id="cd00353">
    <property type="entry name" value="Ribosomal_S15p_S13e"/>
    <property type="match status" value="1"/>
</dbReference>
<dbReference type="FunFam" id="1.10.287.10:FF:000002">
    <property type="entry name" value="30S ribosomal protein S15"/>
    <property type="match status" value="1"/>
</dbReference>
<dbReference type="Gene3D" id="6.10.250.3130">
    <property type="match status" value="1"/>
</dbReference>
<dbReference type="Gene3D" id="1.10.287.10">
    <property type="entry name" value="S15/NS1, RNA-binding"/>
    <property type="match status" value="1"/>
</dbReference>
<dbReference type="HAMAP" id="MF_01343_B">
    <property type="entry name" value="Ribosomal_uS15_B"/>
    <property type="match status" value="1"/>
</dbReference>
<dbReference type="InterPro" id="IPR000589">
    <property type="entry name" value="Ribosomal_uS15"/>
</dbReference>
<dbReference type="InterPro" id="IPR005290">
    <property type="entry name" value="Ribosomal_uS15_bac-type"/>
</dbReference>
<dbReference type="InterPro" id="IPR009068">
    <property type="entry name" value="uS15_NS1_RNA-bd_sf"/>
</dbReference>
<dbReference type="NCBIfam" id="TIGR00952">
    <property type="entry name" value="S15_bact"/>
    <property type="match status" value="1"/>
</dbReference>
<dbReference type="PANTHER" id="PTHR23321">
    <property type="entry name" value="RIBOSOMAL PROTEIN S15, BACTERIAL AND ORGANELLAR"/>
    <property type="match status" value="1"/>
</dbReference>
<dbReference type="PANTHER" id="PTHR23321:SF26">
    <property type="entry name" value="SMALL RIBOSOMAL SUBUNIT PROTEIN US15M"/>
    <property type="match status" value="1"/>
</dbReference>
<dbReference type="Pfam" id="PF00312">
    <property type="entry name" value="Ribosomal_S15"/>
    <property type="match status" value="1"/>
</dbReference>
<dbReference type="SMART" id="SM01387">
    <property type="entry name" value="Ribosomal_S15"/>
    <property type="match status" value="1"/>
</dbReference>
<dbReference type="SUPFAM" id="SSF47060">
    <property type="entry name" value="S15/NS1 RNA-binding domain"/>
    <property type="match status" value="1"/>
</dbReference>
<dbReference type="PROSITE" id="PS00362">
    <property type="entry name" value="RIBOSOMAL_S15"/>
    <property type="match status" value="1"/>
</dbReference>
<reference key="1">
    <citation type="journal article" date="2009" name="Environ. Microbiol.">
        <title>Genome sequence of Desulfobacterium autotrophicum HRM2, a marine sulfate reducer oxidizing organic carbon completely to carbon dioxide.</title>
        <authorList>
            <person name="Strittmatter A.W."/>
            <person name="Liesegang H."/>
            <person name="Rabus R."/>
            <person name="Decker I."/>
            <person name="Amann J."/>
            <person name="Andres S."/>
            <person name="Henne A."/>
            <person name="Fricke W.F."/>
            <person name="Martinez-Arias R."/>
            <person name="Bartels D."/>
            <person name="Goesmann A."/>
            <person name="Krause L."/>
            <person name="Puehler A."/>
            <person name="Klenk H.P."/>
            <person name="Richter M."/>
            <person name="Schuler M."/>
            <person name="Gloeckner F.O."/>
            <person name="Meyerdierks A."/>
            <person name="Gottschalk G."/>
            <person name="Amann R."/>
        </authorList>
    </citation>
    <scope>NUCLEOTIDE SEQUENCE [LARGE SCALE GENOMIC DNA]</scope>
    <source>
        <strain>ATCC 43914 / DSM 3382 / VKM B-1955 / HRM2</strain>
    </source>
</reference>
<comment type="function">
    <text evidence="1">One of the primary rRNA binding proteins, it binds directly to 16S rRNA where it helps nucleate assembly of the platform of the 30S subunit by binding and bridging several RNA helices of the 16S rRNA.</text>
</comment>
<comment type="function">
    <text evidence="1">Forms an intersubunit bridge (bridge B4) with the 23S rRNA of the 50S subunit in the ribosome.</text>
</comment>
<comment type="subunit">
    <text evidence="1">Part of the 30S ribosomal subunit. Forms a bridge to the 50S subunit in the 70S ribosome, contacting the 23S rRNA.</text>
</comment>
<comment type="similarity">
    <text evidence="1">Belongs to the universal ribosomal protein uS15 family.</text>
</comment>